<protein>
    <recommendedName>
        <fullName evidence="1">Phosphoribosylformylglycinamidine cyclo-ligase</fullName>
        <ecNumber evidence="1">6.3.3.1</ecNumber>
    </recommendedName>
    <alternativeName>
        <fullName evidence="1">AIR synthase</fullName>
    </alternativeName>
    <alternativeName>
        <fullName evidence="1">AIRS</fullName>
    </alternativeName>
    <alternativeName>
        <fullName evidence="1">Phosphoribosyl-aminoimidazole synthetase</fullName>
    </alternativeName>
</protein>
<sequence length="348" mass="37200">MKETKITYKDAGVDIDAGNTFVQMIKPLVKATSRPEVLADIGGFGGLFSLNMGKYKHPVLVSGTDGVGTKLKLAFLADRHDTIGIDLVAMCVNDIIVQGAEPLFFLDYLATAKLDPAKAASIIKGVSEGCVQAGCALIGGETAEMPGFYTGDEYDMAGFAVGVVEREKIIDGSSITVGNRLIGLASSGLHSNGYSLARKVILEHMGLGIDDQLPGLGKTVAEELLTPTRIYVRSVMNLLRDFNVSGLAHITGGGLLENIPRVLPNGCKAVIKKDSWDVPEIFRIMQKAGNIEENEMFRTFNCGIGMVLVVPEKESEEIMIRLSGLNETAFVIGEVAKCDAGKECVDLV</sequence>
<accession>B5EFU7</accession>
<proteinExistence type="inferred from homology"/>
<gene>
    <name evidence="1" type="primary">purM</name>
    <name type="ordered locus">Gbem_2402</name>
</gene>
<comment type="catalytic activity">
    <reaction evidence="1">
        <text>2-formamido-N(1)-(5-O-phospho-beta-D-ribosyl)acetamidine + ATP = 5-amino-1-(5-phospho-beta-D-ribosyl)imidazole + ADP + phosphate + H(+)</text>
        <dbReference type="Rhea" id="RHEA:23032"/>
        <dbReference type="ChEBI" id="CHEBI:15378"/>
        <dbReference type="ChEBI" id="CHEBI:30616"/>
        <dbReference type="ChEBI" id="CHEBI:43474"/>
        <dbReference type="ChEBI" id="CHEBI:137981"/>
        <dbReference type="ChEBI" id="CHEBI:147287"/>
        <dbReference type="ChEBI" id="CHEBI:456216"/>
        <dbReference type="EC" id="6.3.3.1"/>
    </reaction>
</comment>
<comment type="pathway">
    <text evidence="1">Purine metabolism; IMP biosynthesis via de novo pathway; 5-amino-1-(5-phospho-D-ribosyl)imidazole from N(2)-formyl-N(1)-(5-phospho-D-ribosyl)glycinamide: step 2/2.</text>
</comment>
<comment type="subcellular location">
    <subcellularLocation>
        <location evidence="1">Cytoplasm</location>
    </subcellularLocation>
</comment>
<comment type="similarity">
    <text evidence="1">Belongs to the AIR synthase family.</text>
</comment>
<dbReference type="EC" id="6.3.3.1" evidence="1"/>
<dbReference type="EMBL" id="CP001124">
    <property type="protein sequence ID" value="ACH39412.1"/>
    <property type="molecule type" value="Genomic_DNA"/>
</dbReference>
<dbReference type="RefSeq" id="WP_012530834.1">
    <property type="nucleotide sequence ID" value="NC_011146.1"/>
</dbReference>
<dbReference type="SMR" id="B5EFU7"/>
<dbReference type="STRING" id="404380.Gbem_2402"/>
<dbReference type="KEGG" id="gbm:Gbem_2402"/>
<dbReference type="eggNOG" id="COG0150">
    <property type="taxonomic scope" value="Bacteria"/>
</dbReference>
<dbReference type="HOGENOM" id="CLU_047116_0_0_7"/>
<dbReference type="OrthoDB" id="9777881at2"/>
<dbReference type="UniPathway" id="UPA00074">
    <property type="reaction ID" value="UER00129"/>
</dbReference>
<dbReference type="Proteomes" id="UP000008825">
    <property type="component" value="Chromosome"/>
</dbReference>
<dbReference type="GO" id="GO:0005829">
    <property type="term" value="C:cytosol"/>
    <property type="evidence" value="ECO:0007669"/>
    <property type="project" value="TreeGrafter"/>
</dbReference>
<dbReference type="GO" id="GO:0005524">
    <property type="term" value="F:ATP binding"/>
    <property type="evidence" value="ECO:0007669"/>
    <property type="project" value="UniProtKB-KW"/>
</dbReference>
<dbReference type="GO" id="GO:0004637">
    <property type="term" value="F:phosphoribosylamine-glycine ligase activity"/>
    <property type="evidence" value="ECO:0007669"/>
    <property type="project" value="TreeGrafter"/>
</dbReference>
<dbReference type="GO" id="GO:0004641">
    <property type="term" value="F:phosphoribosylformylglycinamidine cyclo-ligase activity"/>
    <property type="evidence" value="ECO:0007669"/>
    <property type="project" value="UniProtKB-UniRule"/>
</dbReference>
<dbReference type="GO" id="GO:0006189">
    <property type="term" value="P:'de novo' IMP biosynthetic process"/>
    <property type="evidence" value="ECO:0007669"/>
    <property type="project" value="UniProtKB-UniRule"/>
</dbReference>
<dbReference type="GO" id="GO:0046084">
    <property type="term" value="P:adenine biosynthetic process"/>
    <property type="evidence" value="ECO:0007669"/>
    <property type="project" value="TreeGrafter"/>
</dbReference>
<dbReference type="CDD" id="cd02196">
    <property type="entry name" value="PurM"/>
    <property type="match status" value="1"/>
</dbReference>
<dbReference type="FunFam" id="3.30.1330.10:FF:000001">
    <property type="entry name" value="Phosphoribosylformylglycinamidine cyclo-ligase"/>
    <property type="match status" value="1"/>
</dbReference>
<dbReference type="FunFam" id="3.90.650.10:FF:000001">
    <property type="entry name" value="Phosphoribosylformylglycinamidine cyclo-ligase"/>
    <property type="match status" value="1"/>
</dbReference>
<dbReference type="Gene3D" id="3.90.650.10">
    <property type="entry name" value="PurM-like C-terminal domain"/>
    <property type="match status" value="1"/>
</dbReference>
<dbReference type="Gene3D" id="3.30.1330.10">
    <property type="entry name" value="PurM-like, N-terminal domain"/>
    <property type="match status" value="1"/>
</dbReference>
<dbReference type="HAMAP" id="MF_00741">
    <property type="entry name" value="AIRS"/>
    <property type="match status" value="1"/>
</dbReference>
<dbReference type="InterPro" id="IPR010918">
    <property type="entry name" value="PurM-like_C_dom"/>
</dbReference>
<dbReference type="InterPro" id="IPR036676">
    <property type="entry name" value="PurM-like_C_sf"/>
</dbReference>
<dbReference type="InterPro" id="IPR016188">
    <property type="entry name" value="PurM-like_N"/>
</dbReference>
<dbReference type="InterPro" id="IPR036921">
    <property type="entry name" value="PurM-like_N_sf"/>
</dbReference>
<dbReference type="InterPro" id="IPR004733">
    <property type="entry name" value="PurM_cligase"/>
</dbReference>
<dbReference type="NCBIfam" id="TIGR00878">
    <property type="entry name" value="purM"/>
    <property type="match status" value="1"/>
</dbReference>
<dbReference type="PANTHER" id="PTHR10520:SF12">
    <property type="entry name" value="TRIFUNCTIONAL PURINE BIOSYNTHETIC PROTEIN ADENOSINE-3"/>
    <property type="match status" value="1"/>
</dbReference>
<dbReference type="PANTHER" id="PTHR10520">
    <property type="entry name" value="TRIFUNCTIONAL PURINE BIOSYNTHETIC PROTEIN ADENOSINE-3-RELATED"/>
    <property type="match status" value="1"/>
</dbReference>
<dbReference type="Pfam" id="PF00586">
    <property type="entry name" value="AIRS"/>
    <property type="match status" value="1"/>
</dbReference>
<dbReference type="Pfam" id="PF02769">
    <property type="entry name" value="AIRS_C"/>
    <property type="match status" value="1"/>
</dbReference>
<dbReference type="SUPFAM" id="SSF56042">
    <property type="entry name" value="PurM C-terminal domain-like"/>
    <property type="match status" value="1"/>
</dbReference>
<dbReference type="SUPFAM" id="SSF55326">
    <property type="entry name" value="PurM N-terminal domain-like"/>
    <property type="match status" value="1"/>
</dbReference>
<keyword id="KW-0067">ATP-binding</keyword>
<keyword id="KW-0963">Cytoplasm</keyword>
<keyword id="KW-0436">Ligase</keyword>
<keyword id="KW-0547">Nucleotide-binding</keyword>
<keyword id="KW-0658">Purine biosynthesis</keyword>
<keyword id="KW-1185">Reference proteome</keyword>
<evidence type="ECO:0000255" key="1">
    <source>
        <dbReference type="HAMAP-Rule" id="MF_00741"/>
    </source>
</evidence>
<name>PUR5_CITBB</name>
<feature type="chain" id="PRO_1000193026" description="Phosphoribosylformylglycinamidine cyclo-ligase">
    <location>
        <begin position="1"/>
        <end position="348"/>
    </location>
</feature>
<organism>
    <name type="scientific">Citrifermentans bemidjiense (strain ATCC BAA-1014 / DSM 16622 / JCM 12645 / Bem)</name>
    <name type="common">Geobacter bemidjiensis</name>
    <dbReference type="NCBI Taxonomy" id="404380"/>
    <lineage>
        <taxon>Bacteria</taxon>
        <taxon>Pseudomonadati</taxon>
        <taxon>Thermodesulfobacteriota</taxon>
        <taxon>Desulfuromonadia</taxon>
        <taxon>Geobacterales</taxon>
        <taxon>Geobacteraceae</taxon>
        <taxon>Citrifermentans</taxon>
    </lineage>
</organism>
<reference key="1">
    <citation type="submission" date="2008-07" db="EMBL/GenBank/DDBJ databases">
        <title>Complete sequence of Geobacter bemidjiensis BEM.</title>
        <authorList>
            <consortium name="US DOE Joint Genome Institute"/>
            <person name="Lucas S."/>
            <person name="Copeland A."/>
            <person name="Lapidus A."/>
            <person name="Glavina del Rio T."/>
            <person name="Dalin E."/>
            <person name="Tice H."/>
            <person name="Bruce D."/>
            <person name="Goodwin L."/>
            <person name="Pitluck S."/>
            <person name="Kiss H."/>
            <person name="Brettin T."/>
            <person name="Detter J.C."/>
            <person name="Han C."/>
            <person name="Kuske C.R."/>
            <person name="Schmutz J."/>
            <person name="Larimer F."/>
            <person name="Land M."/>
            <person name="Hauser L."/>
            <person name="Kyrpides N."/>
            <person name="Lykidis A."/>
            <person name="Lovley D."/>
            <person name="Richardson P."/>
        </authorList>
    </citation>
    <scope>NUCLEOTIDE SEQUENCE [LARGE SCALE GENOMIC DNA]</scope>
    <source>
        <strain>ATCC BAA-1014 / DSM 16622 / JCM 12645 / Bem</strain>
    </source>
</reference>